<comment type="catalytic activity">
    <reaction evidence="1">
        <text>tRNA(Arg) + L-arginine + ATP = L-arginyl-tRNA(Arg) + AMP + diphosphate</text>
        <dbReference type="Rhea" id="RHEA:20301"/>
        <dbReference type="Rhea" id="RHEA-COMP:9658"/>
        <dbReference type="Rhea" id="RHEA-COMP:9673"/>
        <dbReference type="ChEBI" id="CHEBI:30616"/>
        <dbReference type="ChEBI" id="CHEBI:32682"/>
        <dbReference type="ChEBI" id="CHEBI:33019"/>
        <dbReference type="ChEBI" id="CHEBI:78442"/>
        <dbReference type="ChEBI" id="CHEBI:78513"/>
        <dbReference type="ChEBI" id="CHEBI:456215"/>
        <dbReference type="EC" id="6.1.1.19"/>
    </reaction>
</comment>
<comment type="subunit">
    <text evidence="1">Monomer.</text>
</comment>
<comment type="subcellular location">
    <subcellularLocation>
        <location evidence="1">Cytoplasm</location>
    </subcellularLocation>
</comment>
<comment type="similarity">
    <text evidence="1">Belongs to the class-I aminoacyl-tRNA synthetase family.</text>
</comment>
<protein>
    <recommendedName>
        <fullName evidence="1">Arginine--tRNA ligase</fullName>
        <ecNumber evidence="1">6.1.1.19</ecNumber>
    </recommendedName>
    <alternativeName>
        <fullName evidence="1">Arginyl-tRNA synthetase</fullName>
        <shortName evidence="1">ArgRS</shortName>
    </alternativeName>
</protein>
<accession>Q1LTI8</accession>
<sequence length="578" mass="65685">MNIHAIISDQIHKAMLAAGVPPYYRVQVRPSVKKKFGDYQINGLMATAKQLGVPSYFLAKKVVSFLQLNGIARQIDIAGPGFINIYLDSQWLATKIATAIASPRLGISLIELPQTIVVDYSSPNIAKEMHVGHIRSTIIGDASARILDFIGHKVIRINHIGDWGTHFGMLIAYLQQVEKNIDPEIPLSFLDQLYRQAKDKYDTDPSFAQEARNCVVKLQCGDSFCLKIWQKLVKITINENQKIYNRLNISLSHENIMGESKYNNMLPNIIADLKAKGLAVESAGATVIFLNEFQDKQGNPLGVIIQKKDGAYLYTTTDIACIKYRYEQLKADRIIYYVDSRQHQHLKQIWTIVRKAGYIPQTMQLDHHMFGMIFDKEGKPFKTRVGVNIKLNDLLDEALKRARCLILSKNMDVDPVELEHLAQVISISAIKYAELSKNRTTDYIFNWDDMLSFEGNTAPYILYAYTRIASILKRSNYNKQQILTGSILLEKEHEHLLAVRLLQYHETITTVAHDGRPHILCGYLYNLAVRFSSFYEHCSIINANSDIQRKSRLQLALLTSKTLQHGLSLLGIETVDKM</sequence>
<keyword id="KW-0030">Aminoacyl-tRNA synthetase</keyword>
<keyword id="KW-0067">ATP-binding</keyword>
<keyword id="KW-0963">Cytoplasm</keyword>
<keyword id="KW-0436">Ligase</keyword>
<keyword id="KW-0547">Nucleotide-binding</keyword>
<keyword id="KW-0648">Protein biosynthesis</keyword>
<keyword id="KW-1185">Reference proteome</keyword>
<gene>
    <name evidence="1" type="primary">argS</name>
    <name type="ordered locus">BCI_0276</name>
</gene>
<dbReference type="EC" id="6.1.1.19" evidence="1"/>
<dbReference type="EMBL" id="CP000238">
    <property type="protein sequence ID" value="ABF13938.1"/>
    <property type="molecule type" value="Genomic_DNA"/>
</dbReference>
<dbReference type="RefSeq" id="WP_011520459.1">
    <property type="nucleotide sequence ID" value="NC_007984.1"/>
</dbReference>
<dbReference type="SMR" id="Q1LTI8"/>
<dbReference type="STRING" id="374463.BCI_0276"/>
<dbReference type="KEGG" id="bci:BCI_0276"/>
<dbReference type="HOGENOM" id="CLU_006406_5_1_6"/>
<dbReference type="OrthoDB" id="9803211at2"/>
<dbReference type="Proteomes" id="UP000002427">
    <property type="component" value="Chromosome"/>
</dbReference>
<dbReference type="GO" id="GO:0005737">
    <property type="term" value="C:cytoplasm"/>
    <property type="evidence" value="ECO:0007669"/>
    <property type="project" value="UniProtKB-SubCell"/>
</dbReference>
<dbReference type="GO" id="GO:0004814">
    <property type="term" value="F:arginine-tRNA ligase activity"/>
    <property type="evidence" value="ECO:0007669"/>
    <property type="project" value="UniProtKB-UniRule"/>
</dbReference>
<dbReference type="GO" id="GO:0005524">
    <property type="term" value="F:ATP binding"/>
    <property type="evidence" value="ECO:0007669"/>
    <property type="project" value="UniProtKB-UniRule"/>
</dbReference>
<dbReference type="GO" id="GO:0006420">
    <property type="term" value="P:arginyl-tRNA aminoacylation"/>
    <property type="evidence" value="ECO:0007669"/>
    <property type="project" value="UniProtKB-UniRule"/>
</dbReference>
<dbReference type="CDD" id="cd00671">
    <property type="entry name" value="ArgRS_core"/>
    <property type="match status" value="1"/>
</dbReference>
<dbReference type="FunFam" id="3.40.50.620:FF:000030">
    <property type="entry name" value="Arginine--tRNA ligase"/>
    <property type="match status" value="1"/>
</dbReference>
<dbReference type="FunFam" id="1.10.730.10:FF:000006">
    <property type="entry name" value="Arginyl-tRNA synthetase 2, mitochondrial"/>
    <property type="match status" value="1"/>
</dbReference>
<dbReference type="Gene3D" id="3.30.1360.70">
    <property type="entry name" value="Arginyl tRNA synthetase N-terminal domain"/>
    <property type="match status" value="1"/>
</dbReference>
<dbReference type="Gene3D" id="3.40.50.620">
    <property type="entry name" value="HUPs"/>
    <property type="match status" value="1"/>
</dbReference>
<dbReference type="Gene3D" id="1.10.730.10">
    <property type="entry name" value="Isoleucyl-tRNA Synthetase, Domain 1"/>
    <property type="match status" value="1"/>
</dbReference>
<dbReference type="HAMAP" id="MF_00123">
    <property type="entry name" value="Arg_tRNA_synth"/>
    <property type="match status" value="1"/>
</dbReference>
<dbReference type="InterPro" id="IPR001412">
    <property type="entry name" value="aa-tRNA-synth_I_CS"/>
</dbReference>
<dbReference type="InterPro" id="IPR001278">
    <property type="entry name" value="Arg-tRNA-ligase"/>
</dbReference>
<dbReference type="InterPro" id="IPR005148">
    <property type="entry name" value="Arg-tRNA-synth_N"/>
</dbReference>
<dbReference type="InterPro" id="IPR036695">
    <property type="entry name" value="Arg-tRNA-synth_N_sf"/>
</dbReference>
<dbReference type="InterPro" id="IPR035684">
    <property type="entry name" value="ArgRS_core"/>
</dbReference>
<dbReference type="InterPro" id="IPR008909">
    <property type="entry name" value="DALR_anticod-bd"/>
</dbReference>
<dbReference type="InterPro" id="IPR014729">
    <property type="entry name" value="Rossmann-like_a/b/a_fold"/>
</dbReference>
<dbReference type="InterPro" id="IPR009080">
    <property type="entry name" value="tRNAsynth_Ia_anticodon-bd"/>
</dbReference>
<dbReference type="NCBIfam" id="TIGR00456">
    <property type="entry name" value="argS"/>
    <property type="match status" value="1"/>
</dbReference>
<dbReference type="PANTHER" id="PTHR11956:SF5">
    <property type="entry name" value="ARGININE--TRNA LIGASE, CYTOPLASMIC"/>
    <property type="match status" value="1"/>
</dbReference>
<dbReference type="PANTHER" id="PTHR11956">
    <property type="entry name" value="ARGINYL-TRNA SYNTHETASE"/>
    <property type="match status" value="1"/>
</dbReference>
<dbReference type="Pfam" id="PF03485">
    <property type="entry name" value="Arg_tRNA_synt_N"/>
    <property type="match status" value="1"/>
</dbReference>
<dbReference type="Pfam" id="PF05746">
    <property type="entry name" value="DALR_1"/>
    <property type="match status" value="1"/>
</dbReference>
<dbReference type="Pfam" id="PF00750">
    <property type="entry name" value="tRNA-synt_1d"/>
    <property type="match status" value="1"/>
</dbReference>
<dbReference type="PRINTS" id="PR01038">
    <property type="entry name" value="TRNASYNTHARG"/>
</dbReference>
<dbReference type="SMART" id="SM01016">
    <property type="entry name" value="Arg_tRNA_synt_N"/>
    <property type="match status" value="1"/>
</dbReference>
<dbReference type="SMART" id="SM00836">
    <property type="entry name" value="DALR_1"/>
    <property type="match status" value="1"/>
</dbReference>
<dbReference type="SUPFAM" id="SSF47323">
    <property type="entry name" value="Anticodon-binding domain of a subclass of class I aminoacyl-tRNA synthetases"/>
    <property type="match status" value="1"/>
</dbReference>
<dbReference type="SUPFAM" id="SSF55190">
    <property type="entry name" value="Arginyl-tRNA synthetase (ArgRS), N-terminal 'additional' domain"/>
    <property type="match status" value="1"/>
</dbReference>
<dbReference type="SUPFAM" id="SSF52374">
    <property type="entry name" value="Nucleotidylyl transferase"/>
    <property type="match status" value="1"/>
</dbReference>
<dbReference type="PROSITE" id="PS00178">
    <property type="entry name" value="AA_TRNA_LIGASE_I"/>
    <property type="match status" value="1"/>
</dbReference>
<feature type="chain" id="PRO_1000017990" description="Arginine--tRNA ligase">
    <location>
        <begin position="1"/>
        <end position="578"/>
    </location>
</feature>
<feature type="short sequence motif" description="'HIGH' region">
    <location>
        <begin position="123"/>
        <end position="133"/>
    </location>
</feature>
<organism>
    <name type="scientific">Baumannia cicadellinicola subsp. Homalodisca coagulata</name>
    <dbReference type="NCBI Taxonomy" id="374463"/>
    <lineage>
        <taxon>Bacteria</taxon>
        <taxon>Pseudomonadati</taxon>
        <taxon>Pseudomonadota</taxon>
        <taxon>Gammaproteobacteria</taxon>
        <taxon>Candidatus Palibaumannia</taxon>
    </lineage>
</organism>
<evidence type="ECO:0000255" key="1">
    <source>
        <dbReference type="HAMAP-Rule" id="MF_00123"/>
    </source>
</evidence>
<reference key="1">
    <citation type="journal article" date="2006" name="PLoS Biol.">
        <title>Metabolic complementarity and genomics of the dual bacterial symbiosis of sharpshooters.</title>
        <authorList>
            <person name="Wu D."/>
            <person name="Daugherty S.C."/>
            <person name="Van Aken S.E."/>
            <person name="Pai G.H."/>
            <person name="Watkins K.L."/>
            <person name="Khouri H."/>
            <person name="Tallon L.J."/>
            <person name="Zaborsky J.M."/>
            <person name="Dunbar H.E."/>
            <person name="Tran P.L."/>
            <person name="Moran N.A."/>
            <person name="Eisen J.A."/>
        </authorList>
    </citation>
    <scope>NUCLEOTIDE SEQUENCE [LARGE SCALE GENOMIC DNA]</scope>
</reference>
<name>SYR_BAUCH</name>
<proteinExistence type="inferred from homology"/>